<protein>
    <recommendedName>
        <fullName>Uncharacterized protein DDB_G0282957</fullName>
    </recommendedName>
</protein>
<accession>Q54RS2</accession>
<organism>
    <name type="scientific">Dictyostelium discoideum</name>
    <name type="common">Social amoeba</name>
    <dbReference type="NCBI Taxonomy" id="44689"/>
    <lineage>
        <taxon>Eukaryota</taxon>
        <taxon>Amoebozoa</taxon>
        <taxon>Evosea</taxon>
        <taxon>Eumycetozoa</taxon>
        <taxon>Dictyostelia</taxon>
        <taxon>Dictyosteliales</taxon>
        <taxon>Dictyosteliaceae</taxon>
        <taxon>Dictyostelium</taxon>
    </lineage>
</organism>
<proteinExistence type="predicted"/>
<dbReference type="EMBL" id="AAFI02000049">
    <property type="protein sequence ID" value="EAL65922.1"/>
    <property type="molecule type" value="Genomic_DNA"/>
</dbReference>
<dbReference type="RefSeq" id="XP_639279.1">
    <property type="nucleotide sequence ID" value="XM_634187.1"/>
</dbReference>
<dbReference type="SMR" id="Q54RS2"/>
<dbReference type="FunCoup" id="Q54RS2">
    <property type="interactions" value="640"/>
</dbReference>
<dbReference type="PaxDb" id="44689-DDB0252856"/>
<dbReference type="EnsemblProtists" id="EAL65922">
    <property type="protein sequence ID" value="EAL65922"/>
    <property type="gene ID" value="DDB_G0282957"/>
</dbReference>
<dbReference type="GeneID" id="8623847"/>
<dbReference type="KEGG" id="ddi:DDB_G0282957"/>
<dbReference type="dictyBase" id="DDB_G0282957"/>
<dbReference type="VEuPathDB" id="AmoebaDB:DDB_G0282957"/>
<dbReference type="eggNOG" id="ENOG502RIHT">
    <property type="taxonomic scope" value="Eukaryota"/>
</dbReference>
<dbReference type="HOGENOM" id="CLU_2799321_0_0_1"/>
<dbReference type="InParanoid" id="Q54RS2"/>
<dbReference type="OMA" id="NEYDEYT"/>
<dbReference type="PRO" id="PR:Q54RS2"/>
<dbReference type="Proteomes" id="UP000002195">
    <property type="component" value="Chromosome 4"/>
</dbReference>
<feature type="chain" id="PRO_0000351227" description="Uncharacterized protein DDB_G0282957">
    <location>
        <begin position="1"/>
        <end position="68"/>
    </location>
</feature>
<gene>
    <name type="ORF">DDB_G0282957</name>
</gene>
<keyword id="KW-1185">Reference proteome</keyword>
<name>Y2856_DICDI</name>
<sequence length="68" mass="7853">MDENEYDEYTQISWSDTIKGLIKDPESRNSILENLKNISVFIASSMIIAKYAHKICEPQLLSKILFES</sequence>
<reference key="1">
    <citation type="journal article" date="2005" name="Nature">
        <title>The genome of the social amoeba Dictyostelium discoideum.</title>
        <authorList>
            <person name="Eichinger L."/>
            <person name="Pachebat J.A."/>
            <person name="Gloeckner G."/>
            <person name="Rajandream M.A."/>
            <person name="Sucgang R."/>
            <person name="Berriman M."/>
            <person name="Song J."/>
            <person name="Olsen R."/>
            <person name="Szafranski K."/>
            <person name="Xu Q."/>
            <person name="Tunggal B."/>
            <person name="Kummerfeld S."/>
            <person name="Madera M."/>
            <person name="Konfortov B.A."/>
            <person name="Rivero F."/>
            <person name="Bankier A.T."/>
            <person name="Lehmann R."/>
            <person name="Hamlin N."/>
            <person name="Davies R."/>
            <person name="Gaudet P."/>
            <person name="Fey P."/>
            <person name="Pilcher K."/>
            <person name="Chen G."/>
            <person name="Saunders D."/>
            <person name="Sodergren E.J."/>
            <person name="Davis P."/>
            <person name="Kerhornou A."/>
            <person name="Nie X."/>
            <person name="Hall N."/>
            <person name="Anjard C."/>
            <person name="Hemphill L."/>
            <person name="Bason N."/>
            <person name="Farbrother P."/>
            <person name="Desany B."/>
            <person name="Just E."/>
            <person name="Morio T."/>
            <person name="Rost R."/>
            <person name="Churcher C.M."/>
            <person name="Cooper J."/>
            <person name="Haydock S."/>
            <person name="van Driessche N."/>
            <person name="Cronin A."/>
            <person name="Goodhead I."/>
            <person name="Muzny D.M."/>
            <person name="Mourier T."/>
            <person name="Pain A."/>
            <person name="Lu M."/>
            <person name="Harper D."/>
            <person name="Lindsay R."/>
            <person name="Hauser H."/>
            <person name="James K.D."/>
            <person name="Quiles M."/>
            <person name="Madan Babu M."/>
            <person name="Saito T."/>
            <person name="Buchrieser C."/>
            <person name="Wardroper A."/>
            <person name="Felder M."/>
            <person name="Thangavelu M."/>
            <person name="Johnson D."/>
            <person name="Knights A."/>
            <person name="Loulseged H."/>
            <person name="Mungall K.L."/>
            <person name="Oliver K."/>
            <person name="Price C."/>
            <person name="Quail M.A."/>
            <person name="Urushihara H."/>
            <person name="Hernandez J."/>
            <person name="Rabbinowitsch E."/>
            <person name="Steffen D."/>
            <person name="Sanders M."/>
            <person name="Ma J."/>
            <person name="Kohara Y."/>
            <person name="Sharp S."/>
            <person name="Simmonds M.N."/>
            <person name="Spiegler S."/>
            <person name="Tivey A."/>
            <person name="Sugano S."/>
            <person name="White B."/>
            <person name="Walker D."/>
            <person name="Woodward J.R."/>
            <person name="Winckler T."/>
            <person name="Tanaka Y."/>
            <person name="Shaulsky G."/>
            <person name="Schleicher M."/>
            <person name="Weinstock G.M."/>
            <person name="Rosenthal A."/>
            <person name="Cox E.C."/>
            <person name="Chisholm R.L."/>
            <person name="Gibbs R.A."/>
            <person name="Loomis W.F."/>
            <person name="Platzer M."/>
            <person name="Kay R.R."/>
            <person name="Williams J.G."/>
            <person name="Dear P.H."/>
            <person name="Noegel A.A."/>
            <person name="Barrell B.G."/>
            <person name="Kuspa A."/>
        </authorList>
    </citation>
    <scope>NUCLEOTIDE SEQUENCE [LARGE SCALE GENOMIC DNA]</scope>
    <source>
        <strain>AX4</strain>
    </source>
</reference>